<gene>
    <name evidence="1" type="primary">ruvA</name>
    <name type="ordered locus">SH1279</name>
</gene>
<keyword id="KW-0963">Cytoplasm</keyword>
<keyword id="KW-0227">DNA damage</keyword>
<keyword id="KW-0233">DNA recombination</keyword>
<keyword id="KW-0234">DNA repair</keyword>
<keyword id="KW-0238">DNA-binding</keyword>
<accession>Q4L6Y7</accession>
<feature type="chain" id="PRO_0000224910" description="Holliday junction branch migration complex subunit RuvA">
    <location>
        <begin position="1"/>
        <end position="201"/>
    </location>
</feature>
<feature type="region of interest" description="Domain I" evidence="1">
    <location>
        <begin position="1"/>
        <end position="64"/>
    </location>
</feature>
<feature type="region of interest" description="Domain II" evidence="1">
    <location>
        <begin position="65"/>
        <end position="143"/>
    </location>
</feature>
<feature type="region of interest" description="Flexible linker" evidence="1">
    <location>
        <begin position="144"/>
        <end position="150"/>
    </location>
</feature>
<feature type="region of interest" description="Domain III" evidence="1">
    <location>
        <begin position="151"/>
        <end position="201"/>
    </location>
</feature>
<reference key="1">
    <citation type="journal article" date="2005" name="J. Bacteriol.">
        <title>Whole-genome sequencing of Staphylococcus haemolyticus uncovers the extreme plasticity of its genome and the evolution of human-colonizing staphylococcal species.</title>
        <authorList>
            <person name="Takeuchi F."/>
            <person name="Watanabe S."/>
            <person name="Baba T."/>
            <person name="Yuzawa H."/>
            <person name="Ito T."/>
            <person name="Morimoto Y."/>
            <person name="Kuroda M."/>
            <person name="Cui L."/>
            <person name="Takahashi M."/>
            <person name="Ankai A."/>
            <person name="Baba S."/>
            <person name="Fukui S."/>
            <person name="Lee J.C."/>
            <person name="Hiramatsu K."/>
        </authorList>
    </citation>
    <scope>NUCLEOTIDE SEQUENCE [LARGE SCALE GENOMIC DNA]</scope>
    <source>
        <strain>JCSC1435</strain>
    </source>
</reference>
<evidence type="ECO:0000255" key="1">
    <source>
        <dbReference type="HAMAP-Rule" id="MF_00031"/>
    </source>
</evidence>
<name>RUVA_STAHJ</name>
<dbReference type="EMBL" id="AP006716">
    <property type="protein sequence ID" value="BAE04588.1"/>
    <property type="molecule type" value="Genomic_DNA"/>
</dbReference>
<dbReference type="RefSeq" id="WP_011275577.1">
    <property type="nucleotide sequence ID" value="NC_007168.1"/>
</dbReference>
<dbReference type="SMR" id="Q4L6Y7"/>
<dbReference type="GeneID" id="93780681"/>
<dbReference type="KEGG" id="sha:SH1279"/>
<dbReference type="eggNOG" id="COG0632">
    <property type="taxonomic scope" value="Bacteria"/>
</dbReference>
<dbReference type="HOGENOM" id="CLU_087936_1_0_9"/>
<dbReference type="OrthoDB" id="5293449at2"/>
<dbReference type="Proteomes" id="UP000000543">
    <property type="component" value="Chromosome"/>
</dbReference>
<dbReference type="GO" id="GO:0005737">
    <property type="term" value="C:cytoplasm"/>
    <property type="evidence" value="ECO:0007669"/>
    <property type="project" value="UniProtKB-SubCell"/>
</dbReference>
<dbReference type="GO" id="GO:0009379">
    <property type="term" value="C:Holliday junction helicase complex"/>
    <property type="evidence" value="ECO:0007669"/>
    <property type="project" value="InterPro"/>
</dbReference>
<dbReference type="GO" id="GO:0048476">
    <property type="term" value="C:Holliday junction resolvase complex"/>
    <property type="evidence" value="ECO:0007669"/>
    <property type="project" value="UniProtKB-UniRule"/>
</dbReference>
<dbReference type="GO" id="GO:0005524">
    <property type="term" value="F:ATP binding"/>
    <property type="evidence" value="ECO:0007669"/>
    <property type="project" value="InterPro"/>
</dbReference>
<dbReference type="GO" id="GO:0000400">
    <property type="term" value="F:four-way junction DNA binding"/>
    <property type="evidence" value="ECO:0007669"/>
    <property type="project" value="UniProtKB-UniRule"/>
</dbReference>
<dbReference type="GO" id="GO:0009378">
    <property type="term" value="F:four-way junction helicase activity"/>
    <property type="evidence" value="ECO:0007669"/>
    <property type="project" value="InterPro"/>
</dbReference>
<dbReference type="GO" id="GO:0006310">
    <property type="term" value="P:DNA recombination"/>
    <property type="evidence" value="ECO:0007669"/>
    <property type="project" value="UniProtKB-UniRule"/>
</dbReference>
<dbReference type="GO" id="GO:0006281">
    <property type="term" value="P:DNA repair"/>
    <property type="evidence" value="ECO:0007669"/>
    <property type="project" value="UniProtKB-UniRule"/>
</dbReference>
<dbReference type="CDD" id="cd14332">
    <property type="entry name" value="UBA_RuvA_C"/>
    <property type="match status" value="1"/>
</dbReference>
<dbReference type="Gene3D" id="1.10.150.20">
    <property type="entry name" value="5' to 3' exonuclease, C-terminal subdomain"/>
    <property type="match status" value="1"/>
</dbReference>
<dbReference type="Gene3D" id="1.10.8.10">
    <property type="entry name" value="DNA helicase RuvA subunit, C-terminal domain"/>
    <property type="match status" value="1"/>
</dbReference>
<dbReference type="Gene3D" id="2.40.50.140">
    <property type="entry name" value="Nucleic acid-binding proteins"/>
    <property type="match status" value="1"/>
</dbReference>
<dbReference type="HAMAP" id="MF_00031">
    <property type="entry name" value="DNA_HJ_migration_RuvA"/>
    <property type="match status" value="1"/>
</dbReference>
<dbReference type="InterPro" id="IPR013849">
    <property type="entry name" value="DNA_helicase_Holl-junc_RuvA_I"/>
</dbReference>
<dbReference type="InterPro" id="IPR003583">
    <property type="entry name" value="Hlx-hairpin-Hlx_DNA-bd_motif"/>
</dbReference>
<dbReference type="InterPro" id="IPR012340">
    <property type="entry name" value="NA-bd_OB-fold"/>
</dbReference>
<dbReference type="InterPro" id="IPR000085">
    <property type="entry name" value="RuvA"/>
</dbReference>
<dbReference type="InterPro" id="IPR010994">
    <property type="entry name" value="RuvA_2-like"/>
</dbReference>
<dbReference type="InterPro" id="IPR011114">
    <property type="entry name" value="RuvA_C"/>
</dbReference>
<dbReference type="InterPro" id="IPR036267">
    <property type="entry name" value="RuvA_C_sf"/>
</dbReference>
<dbReference type="NCBIfam" id="TIGR00084">
    <property type="entry name" value="ruvA"/>
    <property type="match status" value="1"/>
</dbReference>
<dbReference type="Pfam" id="PF14520">
    <property type="entry name" value="HHH_5"/>
    <property type="match status" value="1"/>
</dbReference>
<dbReference type="Pfam" id="PF07499">
    <property type="entry name" value="RuvA_C"/>
    <property type="match status" value="1"/>
</dbReference>
<dbReference type="Pfam" id="PF01330">
    <property type="entry name" value="RuvA_N"/>
    <property type="match status" value="1"/>
</dbReference>
<dbReference type="SMART" id="SM00278">
    <property type="entry name" value="HhH1"/>
    <property type="match status" value="2"/>
</dbReference>
<dbReference type="SUPFAM" id="SSF46929">
    <property type="entry name" value="DNA helicase RuvA subunit, C-terminal domain"/>
    <property type="match status" value="1"/>
</dbReference>
<dbReference type="SUPFAM" id="SSF50249">
    <property type="entry name" value="Nucleic acid-binding proteins"/>
    <property type="match status" value="1"/>
</dbReference>
<dbReference type="SUPFAM" id="SSF47781">
    <property type="entry name" value="RuvA domain 2-like"/>
    <property type="match status" value="1"/>
</dbReference>
<proteinExistence type="inferred from homology"/>
<protein>
    <recommendedName>
        <fullName evidence="1">Holliday junction branch migration complex subunit RuvA</fullName>
    </recommendedName>
</protein>
<sequence length="201" mass="22531">MYAYIRGKLTQLFPTHVVVESINGVGYEIQTPNSYRFQKYLEKELVIYTSLIVREDAQLLYGFINEEEKDMFLSLIKVTGIGPKSALAILATSTPNEVKMAIENENDAYLTKFPGIGKKTARQIVLDLKGKVQITRETTETLLSMNEENSNSENLVKEALLALEALGYSKREISKVEKVLNKSTFDSVDEAVKLGLKTLVS</sequence>
<comment type="function">
    <text evidence="1">The RuvA-RuvB-RuvC complex processes Holliday junction (HJ) DNA during genetic recombination and DNA repair, while the RuvA-RuvB complex plays an important role in the rescue of blocked DNA replication forks via replication fork reversal (RFR). RuvA specifically binds to HJ cruciform DNA, conferring on it an open structure. The RuvB hexamer acts as an ATP-dependent pump, pulling dsDNA into and through the RuvAB complex. HJ branch migration allows RuvC to scan DNA until it finds its consensus sequence, where it cleaves and resolves the cruciform DNA.</text>
</comment>
<comment type="subunit">
    <text evidence="1">Homotetramer. Forms an RuvA(8)-RuvB(12)-Holliday junction (HJ) complex. HJ DNA is sandwiched between 2 RuvA tetramers; dsDNA enters through RuvA and exits via RuvB. An RuvB hexamer assembles on each DNA strand where it exits the tetramer. Each RuvB hexamer is contacted by two RuvA subunits (via domain III) on 2 adjacent RuvB subunits; this complex drives branch migration. In the full resolvosome a probable DNA-RuvA(4)-RuvB(12)-RuvC(2) complex forms which resolves the HJ.</text>
</comment>
<comment type="subcellular location">
    <subcellularLocation>
        <location evidence="1">Cytoplasm</location>
    </subcellularLocation>
</comment>
<comment type="domain">
    <text evidence="1">Has three domains with a flexible linker between the domains II and III and assumes an 'L' shape. Domain III is highly mobile and contacts RuvB.</text>
</comment>
<comment type="similarity">
    <text evidence="1">Belongs to the RuvA family.</text>
</comment>
<organism>
    <name type="scientific">Staphylococcus haemolyticus (strain JCSC1435)</name>
    <dbReference type="NCBI Taxonomy" id="279808"/>
    <lineage>
        <taxon>Bacteria</taxon>
        <taxon>Bacillati</taxon>
        <taxon>Bacillota</taxon>
        <taxon>Bacilli</taxon>
        <taxon>Bacillales</taxon>
        <taxon>Staphylococcaceae</taxon>
        <taxon>Staphylococcus</taxon>
    </lineage>
</organism>